<name>ADCA_STRP8</name>
<comment type="function">
    <text evidence="1">Part of the ATP-binding cassette (ABC) transport system AdcABC involved in zinc import (By similarity). Binds zinc with high affinity and specificity and delivers it to the membrane permease for translocation into the cytoplasm (By similarity).</text>
</comment>
<comment type="domain">
    <text evidence="1">The His-rich loop facilitates the closure of the zinc binding site and is required for zinc acquisition.</text>
</comment>
<comment type="similarity">
    <text evidence="4">Belongs to the bacterial solute-binding protein 9 family.</text>
</comment>
<reference key="1">
    <citation type="journal article" date="2002" name="Proc. Natl. Acad. Sci. U.S.A.">
        <title>Genome sequence and comparative microarray analysis of serotype M18 group A Streptococcus strains associated with acute rheumatic fever outbreaks.</title>
        <authorList>
            <person name="Smoot J.C."/>
            <person name="Barbian K.D."/>
            <person name="Van Gompel J.J."/>
            <person name="Smoot L.M."/>
            <person name="Chaussee M.S."/>
            <person name="Sylva G.L."/>
            <person name="Sturdevant D.E."/>
            <person name="Ricklefs S.M."/>
            <person name="Porcella S.F."/>
            <person name="Parkins L.D."/>
            <person name="Beres S.B."/>
            <person name="Campbell D.S."/>
            <person name="Smith T.M."/>
            <person name="Zhang Q."/>
            <person name="Kapur V."/>
            <person name="Daly J.A."/>
            <person name="Veasy L.G."/>
            <person name="Musser J.M."/>
        </authorList>
    </citation>
    <scope>NUCLEOTIDE SEQUENCE [LARGE SCALE GENOMIC DNA]</scope>
    <source>
        <strain>MGAS8232</strain>
    </source>
</reference>
<organism>
    <name type="scientific">Streptococcus pyogenes serotype M18 (strain MGAS8232)</name>
    <dbReference type="NCBI Taxonomy" id="186103"/>
    <lineage>
        <taxon>Bacteria</taxon>
        <taxon>Bacillati</taxon>
        <taxon>Bacillota</taxon>
        <taxon>Bacilli</taxon>
        <taxon>Lactobacillales</taxon>
        <taxon>Streptococcaceae</taxon>
        <taxon>Streptococcus</taxon>
    </lineage>
</organism>
<accession>Q8P1N2</accession>
<protein>
    <recommendedName>
        <fullName>Zinc-binding protein AdcA</fullName>
    </recommendedName>
</protein>
<proteinExistence type="inferred from homology"/>
<keyword id="KW-0406">Ion transport</keyword>
<keyword id="KW-0479">Metal-binding</keyword>
<keyword id="KW-0732">Signal</keyword>
<keyword id="KW-0813">Transport</keyword>
<keyword id="KW-0862">Zinc</keyword>
<keyword id="KW-0864">Zinc transport</keyword>
<evidence type="ECO:0000250" key="1">
    <source>
        <dbReference type="UniProtKB" id="Q8CWN2"/>
    </source>
</evidence>
<evidence type="ECO:0000255" key="2"/>
<evidence type="ECO:0000256" key="3">
    <source>
        <dbReference type="SAM" id="MobiDB-lite"/>
    </source>
</evidence>
<evidence type="ECO:0000305" key="4"/>
<feature type="signal peptide" evidence="2">
    <location>
        <begin position="1"/>
        <end position="28"/>
    </location>
</feature>
<feature type="chain" id="PRO_0000031871" description="Zinc-binding protein AdcA">
    <location>
        <begin position="29"/>
        <end position="515"/>
    </location>
</feature>
<feature type="region of interest" description="Disordered" evidence="3">
    <location>
        <begin position="125"/>
        <end position="148"/>
    </location>
</feature>
<feature type="region of interest" description="His-rich loop" evidence="1">
    <location>
        <begin position="129"/>
        <end position="148"/>
    </location>
</feature>
<feature type="binding site" evidence="1">
    <location>
        <position position="66"/>
    </location>
    <ligand>
        <name>Zn(2+)</name>
        <dbReference type="ChEBI" id="CHEBI:29105"/>
    </ligand>
</feature>
<feature type="binding site" evidence="1">
    <location>
        <position position="152"/>
    </location>
    <ligand>
        <name>Zn(2+)</name>
        <dbReference type="ChEBI" id="CHEBI:29105"/>
    </ligand>
</feature>
<feature type="binding site" evidence="1">
    <location>
        <position position="216"/>
    </location>
    <ligand>
        <name>Zn(2+)</name>
        <dbReference type="ChEBI" id="CHEBI:29105"/>
    </ligand>
</feature>
<feature type="binding site" evidence="1">
    <location>
        <position position="291"/>
    </location>
    <ligand>
        <name>Zn(2+)</name>
        <dbReference type="ChEBI" id="CHEBI:29105"/>
    </ligand>
</feature>
<dbReference type="EMBL" id="AE009949">
    <property type="protein sequence ID" value="AAL97448.1"/>
    <property type="molecule type" value="Genomic_DNA"/>
</dbReference>
<dbReference type="RefSeq" id="WP_011017594.1">
    <property type="nucleotide sequence ID" value="NC_003485.1"/>
</dbReference>
<dbReference type="SMR" id="Q8P1N2"/>
<dbReference type="KEGG" id="spm:spyM18_0781"/>
<dbReference type="HOGENOM" id="CLU_016838_7_0_9"/>
<dbReference type="GO" id="GO:0008270">
    <property type="term" value="F:zinc ion binding"/>
    <property type="evidence" value="ECO:0007669"/>
    <property type="project" value="InterPro"/>
</dbReference>
<dbReference type="GO" id="GO:0007155">
    <property type="term" value="P:cell adhesion"/>
    <property type="evidence" value="ECO:0007669"/>
    <property type="project" value="InterPro"/>
</dbReference>
<dbReference type="GO" id="GO:0006829">
    <property type="term" value="P:zinc ion transport"/>
    <property type="evidence" value="ECO:0007669"/>
    <property type="project" value="UniProtKB-KW"/>
</dbReference>
<dbReference type="CDD" id="cd01017">
    <property type="entry name" value="AdcA"/>
    <property type="match status" value="1"/>
</dbReference>
<dbReference type="Gene3D" id="2.40.128.20">
    <property type="match status" value="1"/>
</dbReference>
<dbReference type="Gene3D" id="3.40.50.1980">
    <property type="entry name" value="Nitrogenase molybdenum iron protein domain"/>
    <property type="match status" value="2"/>
</dbReference>
<dbReference type="InterPro" id="IPR006129">
    <property type="entry name" value="AdhesinB"/>
</dbReference>
<dbReference type="InterPro" id="IPR050492">
    <property type="entry name" value="Bact_metal-bind_prot9"/>
</dbReference>
<dbReference type="InterPro" id="IPR012674">
    <property type="entry name" value="Calycin"/>
</dbReference>
<dbReference type="InterPro" id="IPR006128">
    <property type="entry name" value="Lipoprotein_PsaA-like"/>
</dbReference>
<dbReference type="InterPro" id="IPR015304">
    <property type="entry name" value="ZinT_dom"/>
</dbReference>
<dbReference type="InterPro" id="IPR006127">
    <property type="entry name" value="ZnuA-like"/>
</dbReference>
<dbReference type="PANTHER" id="PTHR42953:SF3">
    <property type="entry name" value="HIGH-AFFINITY ZINC UPTAKE SYSTEM PROTEIN ZNUA"/>
    <property type="match status" value="1"/>
</dbReference>
<dbReference type="PANTHER" id="PTHR42953">
    <property type="entry name" value="HIGH-AFFINITY ZINC UPTAKE SYSTEM PROTEIN ZNUA-RELATED"/>
    <property type="match status" value="1"/>
</dbReference>
<dbReference type="Pfam" id="PF09223">
    <property type="entry name" value="ZinT"/>
    <property type="match status" value="1"/>
</dbReference>
<dbReference type="Pfam" id="PF01297">
    <property type="entry name" value="ZnuA"/>
    <property type="match status" value="1"/>
</dbReference>
<dbReference type="PRINTS" id="PR00691">
    <property type="entry name" value="ADHESINB"/>
</dbReference>
<dbReference type="PRINTS" id="PR00690">
    <property type="entry name" value="ADHESNFAMILY"/>
</dbReference>
<dbReference type="SUPFAM" id="SSF53807">
    <property type="entry name" value="Helical backbone' metal receptor"/>
    <property type="match status" value="1"/>
</dbReference>
<dbReference type="SUPFAM" id="SSF50814">
    <property type="entry name" value="Lipocalins"/>
    <property type="match status" value="1"/>
</dbReference>
<sequence length="515" mass="58525">MKKKILLMMSLISVFFAWQLTQAKQVLAEGKVKVVTTFYPVYEFTKGVIGNDGDVSMLMKAGTEPHDFEPSTKDIKKIQDADAFVYMDDNMETWVSDVKKSLTSKKVTIVKGTGNMLLVAGAGHDHHHEDADKKHEHNKHSEEGHNHAFDPHVWLSPYRSITVVENIRDSLSKAYPEKAENFKANAATYIEKLKELDKDYTAALSDAKQKSFVTQHAAFGYMALDYGLNQISINGVTPDAEPSAKRIATLSKYVKKYGIKYIYFEENASSKVAKTLAKEAGVKAAVLSPLEGLTKKEMKAGQDYFTVMRKNLETLRLTTDVAGKEILPEKDTTKTVYNGYFKDKEVKDRQLSDWSGSWQSVYPYLQDGTLDQVWDYKAKKSKGKMTAAEYKDYYTTGYKTDVEQIKINGKKKTMTFVRNGEKKTFTYTYAGKEILTYPKGNRGVRFMFEAKEPNAGEFKYVQFSDHAIAPEKAEHFHLYWGGDSQEKLHKELEHWPTYYGSDLSGREIAQEINAH</sequence>
<gene>
    <name type="primary">adcA</name>
    <name type="ordered locus">spyM18_0781</name>
</gene>